<sequence length="379" mass="40548">MPAQTHISKLTLTNFRNYAALAIDLAPGAVVFSGDNGAGKTNLLEAISLLTPGRGLRRAPYADVAREGGDGGFALHARLDGPDGQVEIGTGISVGEGEGGRRVRINGATARSAEDMLEWLRVVWLTPAMDALFTGPAADRRRFLDRLVLAIDPGHGQRALDYEKAMRGRNRLLTDGSRDDRWFEAIETQMAETGVAIAAARAELVRLLAAMIDRLPDTGPFPQADISLSGDLEAEVSSAPAVDVEERFRRALAGGRDRDRAAGRTLEGPHRSDLLVRHRPKAMPAELCSTGEQKALLVGIVLSHARLTGEMSGMTPILLLDEIAAHLDGGRRAALFSILEELNCQAFMTGTDAALFSSLMGRAQFLTVDHGTVGPTEDA</sequence>
<name>RECF_RHILO</name>
<comment type="function">
    <text evidence="1">The RecF protein is involved in DNA metabolism; it is required for DNA replication and normal SOS inducibility. RecF binds preferentially to single-stranded, linear DNA. It also seems to bind ATP.</text>
</comment>
<comment type="subcellular location">
    <subcellularLocation>
        <location evidence="1">Cytoplasm</location>
    </subcellularLocation>
</comment>
<comment type="similarity">
    <text evidence="1">Belongs to the RecF family.</text>
</comment>
<reference key="1">
    <citation type="journal article" date="2000" name="DNA Res.">
        <title>Complete genome structure of the nitrogen-fixing symbiotic bacterium Mesorhizobium loti.</title>
        <authorList>
            <person name="Kaneko T."/>
            <person name="Nakamura Y."/>
            <person name="Sato S."/>
            <person name="Asamizu E."/>
            <person name="Kato T."/>
            <person name="Sasamoto S."/>
            <person name="Watanabe A."/>
            <person name="Idesawa K."/>
            <person name="Ishikawa A."/>
            <person name="Kawashima K."/>
            <person name="Kimura T."/>
            <person name="Kishida Y."/>
            <person name="Kiyokawa C."/>
            <person name="Kohara M."/>
            <person name="Matsumoto M."/>
            <person name="Matsuno A."/>
            <person name="Mochizuki Y."/>
            <person name="Nakayama S."/>
            <person name="Nakazaki N."/>
            <person name="Shimpo S."/>
            <person name="Sugimoto M."/>
            <person name="Takeuchi C."/>
            <person name="Yamada M."/>
            <person name="Tabata S."/>
        </authorList>
    </citation>
    <scope>NUCLEOTIDE SEQUENCE [LARGE SCALE GENOMIC DNA]</scope>
    <source>
        <strain>LMG 29417 / CECT 9101 / MAFF 303099</strain>
    </source>
</reference>
<keyword id="KW-0067">ATP-binding</keyword>
<keyword id="KW-0963">Cytoplasm</keyword>
<keyword id="KW-0227">DNA damage</keyword>
<keyword id="KW-0234">DNA repair</keyword>
<keyword id="KW-0235">DNA replication</keyword>
<keyword id="KW-0238">DNA-binding</keyword>
<keyword id="KW-0547">Nucleotide-binding</keyword>
<keyword id="KW-0742">SOS response</keyword>
<feature type="chain" id="PRO_0000196447" description="DNA replication and repair protein RecF">
    <location>
        <begin position="1"/>
        <end position="379"/>
    </location>
</feature>
<feature type="binding site" evidence="1">
    <location>
        <begin position="34"/>
        <end position="41"/>
    </location>
    <ligand>
        <name>ATP</name>
        <dbReference type="ChEBI" id="CHEBI:30616"/>
    </ligand>
</feature>
<dbReference type="EMBL" id="BA000012">
    <property type="protein sequence ID" value="BAB52001.1"/>
    <property type="molecule type" value="Genomic_DNA"/>
</dbReference>
<dbReference type="RefSeq" id="WP_010913339.1">
    <property type="nucleotide sequence ID" value="NC_002678.2"/>
</dbReference>
<dbReference type="SMR" id="Q98BH1"/>
<dbReference type="KEGG" id="mlo:mll5578"/>
<dbReference type="PATRIC" id="fig|266835.9.peg.4433"/>
<dbReference type="eggNOG" id="COG1195">
    <property type="taxonomic scope" value="Bacteria"/>
</dbReference>
<dbReference type="HOGENOM" id="CLU_040267_2_0_5"/>
<dbReference type="Proteomes" id="UP000000552">
    <property type="component" value="Chromosome"/>
</dbReference>
<dbReference type="GO" id="GO:0005737">
    <property type="term" value="C:cytoplasm"/>
    <property type="evidence" value="ECO:0007669"/>
    <property type="project" value="UniProtKB-SubCell"/>
</dbReference>
<dbReference type="GO" id="GO:0005524">
    <property type="term" value="F:ATP binding"/>
    <property type="evidence" value="ECO:0007669"/>
    <property type="project" value="UniProtKB-UniRule"/>
</dbReference>
<dbReference type="GO" id="GO:0016887">
    <property type="term" value="F:ATP hydrolysis activity"/>
    <property type="evidence" value="ECO:0007669"/>
    <property type="project" value="InterPro"/>
</dbReference>
<dbReference type="GO" id="GO:0003697">
    <property type="term" value="F:single-stranded DNA binding"/>
    <property type="evidence" value="ECO:0007669"/>
    <property type="project" value="UniProtKB-UniRule"/>
</dbReference>
<dbReference type="GO" id="GO:0006260">
    <property type="term" value="P:DNA replication"/>
    <property type="evidence" value="ECO:0007669"/>
    <property type="project" value="UniProtKB-UniRule"/>
</dbReference>
<dbReference type="GO" id="GO:0000731">
    <property type="term" value="P:DNA synthesis involved in DNA repair"/>
    <property type="evidence" value="ECO:0007669"/>
    <property type="project" value="TreeGrafter"/>
</dbReference>
<dbReference type="GO" id="GO:0006302">
    <property type="term" value="P:double-strand break repair"/>
    <property type="evidence" value="ECO:0007669"/>
    <property type="project" value="TreeGrafter"/>
</dbReference>
<dbReference type="GO" id="GO:0009432">
    <property type="term" value="P:SOS response"/>
    <property type="evidence" value="ECO:0007669"/>
    <property type="project" value="UniProtKB-UniRule"/>
</dbReference>
<dbReference type="CDD" id="cd03242">
    <property type="entry name" value="ABC_RecF"/>
    <property type="match status" value="1"/>
</dbReference>
<dbReference type="Gene3D" id="3.40.50.300">
    <property type="entry name" value="P-loop containing nucleotide triphosphate hydrolases"/>
    <property type="match status" value="1"/>
</dbReference>
<dbReference type="Gene3D" id="1.20.1050.90">
    <property type="entry name" value="RecF/RecN/SMC, N-terminal domain"/>
    <property type="match status" value="1"/>
</dbReference>
<dbReference type="HAMAP" id="MF_00365">
    <property type="entry name" value="RecF"/>
    <property type="match status" value="1"/>
</dbReference>
<dbReference type="InterPro" id="IPR003593">
    <property type="entry name" value="AAA+_ATPase"/>
</dbReference>
<dbReference type="InterPro" id="IPR001238">
    <property type="entry name" value="DNA-binding_RecF"/>
</dbReference>
<dbReference type="InterPro" id="IPR018078">
    <property type="entry name" value="DNA-binding_RecF_CS"/>
</dbReference>
<dbReference type="InterPro" id="IPR027417">
    <property type="entry name" value="P-loop_NTPase"/>
</dbReference>
<dbReference type="InterPro" id="IPR003395">
    <property type="entry name" value="RecF/RecN/SMC_N"/>
</dbReference>
<dbReference type="InterPro" id="IPR042174">
    <property type="entry name" value="RecF_2"/>
</dbReference>
<dbReference type="NCBIfam" id="TIGR00611">
    <property type="entry name" value="recf"/>
    <property type="match status" value="1"/>
</dbReference>
<dbReference type="PANTHER" id="PTHR32182">
    <property type="entry name" value="DNA REPLICATION AND REPAIR PROTEIN RECF"/>
    <property type="match status" value="1"/>
</dbReference>
<dbReference type="PANTHER" id="PTHR32182:SF0">
    <property type="entry name" value="DNA REPLICATION AND REPAIR PROTEIN RECF"/>
    <property type="match status" value="1"/>
</dbReference>
<dbReference type="Pfam" id="PF02463">
    <property type="entry name" value="SMC_N"/>
    <property type="match status" value="1"/>
</dbReference>
<dbReference type="SMART" id="SM00382">
    <property type="entry name" value="AAA"/>
    <property type="match status" value="1"/>
</dbReference>
<dbReference type="SUPFAM" id="SSF52540">
    <property type="entry name" value="P-loop containing nucleoside triphosphate hydrolases"/>
    <property type="match status" value="1"/>
</dbReference>
<dbReference type="PROSITE" id="PS00617">
    <property type="entry name" value="RECF_1"/>
    <property type="match status" value="1"/>
</dbReference>
<dbReference type="PROSITE" id="PS00618">
    <property type="entry name" value="RECF_2"/>
    <property type="match status" value="1"/>
</dbReference>
<gene>
    <name evidence="1" type="primary">recF</name>
    <name type="ordered locus">mll5578</name>
</gene>
<accession>Q98BH1</accession>
<organism>
    <name type="scientific">Mesorhizobium japonicum (strain LMG 29417 / CECT 9101 / MAFF 303099)</name>
    <name type="common">Mesorhizobium loti (strain MAFF 303099)</name>
    <dbReference type="NCBI Taxonomy" id="266835"/>
    <lineage>
        <taxon>Bacteria</taxon>
        <taxon>Pseudomonadati</taxon>
        <taxon>Pseudomonadota</taxon>
        <taxon>Alphaproteobacteria</taxon>
        <taxon>Hyphomicrobiales</taxon>
        <taxon>Phyllobacteriaceae</taxon>
        <taxon>Mesorhizobium</taxon>
    </lineage>
</organism>
<evidence type="ECO:0000255" key="1">
    <source>
        <dbReference type="HAMAP-Rule" id="MF_00365"/>
    </source>
</evidence>
<protein>
    <recommendedName>
        <fullName evidence="1">DNA replication and repair protein RecF</fullName>
    </recommendedName>
</protein>
<proteinExistence type="inferred from homology"/>